<protein>
    <recommendedName>
        <fullName evidence="1">L-rhamnose-proton symporter</fullName>
    </recommendedName>
    <alternativeName>
        <fullName evidence="1">L-rhamnose-H(+) transport protein</fullName>
    </alternativeName>
</protein>
<accession>Q66FF0</accession>
<proteinExistence type="inferred from homology"/>
<reference key="1">
    <citation type="journal article" date="2004" name="Proc. Natl. Acad. Sci. U.S.A.">
        <title>Insights into the evolution of Yersinia pestis through whole-genome comparison with Yersinia pseudotuberculosis.</title>
        <authorList>
            <person name="Chain P.S.G."/>
            <person name="Carniel E."/>
            <person name="Larimer F.W."/>
            <person name="Lamerdin J."/>
            <person name="Stoutland P.O."/>
            <person name="Regala W.M."/>
            <person name="Georgescu A.M."/>
            <person name="Vergez L.M."/>
            <person name="Land M.L."/>
            <person name="Motin V.L."/>
            <person name="Brubaker R.R."/>
            <person name="Fowler J."/>
            <person name="Hinnebusch J."/>
            <person name="Marceau M."/>
            <person name="Medigue C."/>
            <person name="Simonet M."/>
            <person name="Chenal-Francisque V."/>
            <person name="Souza B."/>
            <person name="Dacheux D."/>
            <person name="Elliott J.M."/>
            <person name="Derbise A."/>
            <person name="Hauser L.J."/>
            <person name="Garcia E."/>
        </authorList>
    </citation>
    <scope>NUCLEOTIDE SEQUENCE [LARGE SCALE GENOMIC DNA]</scope>
    <source>
        <strain>IP32953</strain>
    </source>
</reference>
<dbReference type="EMBL" id="BX936398">
    <property type="protein sequence ID" value="CAH19628.1"/>
    <property type="molecule type" value="Genomic_DNA"/>
</dbReference>
<dbReference type="RefSeq" id="WP_002209111.1">
    <property type="nucleotide sequence ID" value="NZ_CP009712.1"/>
</dbReference>
<dbReference type="GeneID" id="57974271"/>
<dbReference type="KEGG" id="ypo:BZ17_2180"/>
<dbReference type="KEGG" id="yps:YPTB0388"/>
<dbReference type="PATRIC" id="fig|273123.14.peg.2307"/>
<dbReference type="Proteomes" id="UP000001011">
    <property type="component" value="Chromosome"/>
</dbReference>
<dbReference type="GO" id="GO:0005886">
    <property type="term" value="C:plasma membrane"/>
    <property type="evidence" value="ECO:0007669"/>
    <property type="project" value="UniProtKB-SubCell"/>
</dbReference>
<dbReference type="GO" id="GO:0015153">
    <property type="term" value="F:rhamnose transmembrane transporter activity"/>
    <property type="evidence" value="ECO:0007669"/>
    <property type="project" value="UniProtKB-UniRule"/>
</dbReference>
<dbReference type="GO" id="GO:0015293">
    <property type="term" value="F:symporter activity"/>
    <property type="evidence" value="ECO:0007669"/>
    <property type="project" value="UniProtKB-KW"/>
</dbReference>
<dbReference type="HAMAP" id="MF_01532">
    <property type="entry name" value="RhaT"/>
    <property type="match status" value="1"/>
</dbReference>
<dbReference type="InterPro" id="IPR004673">
    <property type="entry name" value="L-rhamnose-proton_sym_RhaT"/>
</dbReference>
<dbReference type="NCBIfam" id="NF010021">
    <property type="entry name" value="PRK13499.1-1"/>
    <property type="match status" value="1"/>
</dbReference>
<dbReference type="NCBIfam" id="NF010023">
    <property type="entry name" value="PRK13499.1-3"/>
    <property type="match status" value="1"/>
</dbReference>
<dbReference type="NCBIfam" id="TIGR00776">
    <property type="entry name" value="RhaT"/>
    <property type="match status" value="1"/>
</dbReference>
<dbReference type="Pfam" id="PF06379">
    <property type="entry name" value="RhaT"/>
    <property type="match status" value="1"/>
</dbReference>
<keyword id="KW-0997">Cell inner membrane</keyword>
<keyword id="KW-1003">Cell membrane</keyword>
<keyword id="KW-0472">Membrane</keyword>
<keyword id="KW-0762">Sugar transport</keyword>
<keyword id="KW-0769">Symport</keyword>
<keyword id="KW-0812">Transmembrane</keyword>
<keyword id="KW-1133">Transmembrane helix</keyword>
<keyword id="KW-0813">Transport</keyword>
<gene>
    <name evidence="1" type="primary">rhaT</name>
    <name type="ordered locus">YPTB0388</name>
</gene>
<sequence>MNNAIILGIIWHLVGAASAACFYAPFKQVKKWSWETMWSIGGLVSWLILPWTVSYLLLPDFWQYYGSFSIATLLPVFLFGAMWGIGNINYGLTMRYLGMSMGIGIAIGITLIIGTLMTPILQGRFDVLLGTPGGRMTLLGVFVALIGVAIVSYAGLLKERAMGIQAEEFNLKKGLILAVMCGIFSAGMSFAMDAAKPMHEAASALGINSLYVALPSYVIIMGGGAIINLSYCFIRLATLKNLSVKADFSVAKPLLITNILFSALAGLMWYLQFFFYAWGHAKIPQQYDYMSWMLHMSFYVLCGGIVGLLLKEWKCSTKKPVAVLCIGCLVIILAANIVGLGMAA</sequence>
<comment type="function">
    <text evidence="1">Uptake of L-rhamnose across the cytoplasmic membrane with the concomitant transport of protons into the cell (symport system).</text>
</comment>
<comment type="catalytic activity">
    <reaction evidence="1">
        <text>L-rhamnopyranose(in) + H(+)(in) = L-rhamnopyranose(out) + H(+)(out)</text>
        <dbReference type="Rhea" id="RHEA:29947"/>
        <dbReference type="ChEBI" id="CHEBI:15378"/>
        <dbReference type="ChEBI" id="CHEBI:62346"/>
    </reaction>
    <physiologicalReaction direction="right-to-left" evidence="1">
        <dbReference type="Rhea" id="RHEA:29949"/>
    </physiologicalReaction>
</comment>
<comment type="subcellular location">
    <subcellularLocation>
        <location evidence="1">Cell inner membrane</location>
        <topology evidence="1">Multi-pass membrane protein</topology>
    </subcellularLocation>
</comment>
<comment type="similarity">
    <text evidence="1">Belongs to the L-rhamnose transporter (TC 2.A.7.6) family.</text>
</comment>
<organism>
    <name type="scientific">Yersinia pseudotuberculosis serotype I (strain IP32953)</name>
    <dbReference type="NCBI Taxonomy" id="273123"/>
    <lineage>
        <taxon>Bacteria</taxon>
        <taxon>Pseudomonadati</taxon>
        <taxon>Pseudomonadota</taxon>
        <taxon>Gammaproteobacteria</taxon>
        <taxon>Enterobacterales</taxon>
        <taxon>Yersiniaceae</taxon>
        <taxon>Yersinia</taxon>
    </lineage>
</organism>
<name>RHAT_YERPS</name>
<evidence type="ECO:0000255" key="1">
    <source>
        <dbReference type="HAMAP-Rule" id="MF_01532"/>
    </source>
</evidence>
<feature type="chain" id="PRO_0000208283" description="L-rhamnose-proton symporter">
    <location>
        <begin position="1"/>
        <end position="344"/>
    </location>
</feature>
<feature type="transmembrane region" description="Helical" evidence="1">
    <location>
        <begin position="4"/>
        <end position="24"/>
    </location>
</feature>
<feature type="transmembrane region" description="Helical" evidence="1">
    <location>
        <begin position="38"/>
        <end position="58"/>
    </location>
</feature>
<feature type="transmembrane region" description="Helical" evidence="1">
    <location>
        <begin position="68"/>
        <end position="88"/>
    </location>
</feature>
<feature type="transmembrane region" description="Helical" evidence="1">
    <location>
        <begin position="101"/>
        <end position="121"/>
    </location>
</feature>
<feature type="transmembrane region" description="Helical" evidence="1">
    <location>
        <begin position="137"/>
        <end position="157"/>
    </location>
</feature>
<feature type="transmembrane region" description="Helical" evidence="1">
    <location>
        <begin position="175"/>
        <end position="195"/>
    </location>
</feature>
<feature type="transmembrane region" description="Helical" evidence="1">
    <location>
        <begin position="207"/>
        <end position="227"/>
    </location>
</feature>
<feature type="transmembrane region" description="Helical" evidence="1">
    <location>
        <begin position="259"/>
        <end position="279"/>
    </location>
</feature>
<feature type="transmembrane region" description="Helical" evidence="1">
    <location>
        <begin position="290"/>
        <end position="310"/>
    </location>
</feature>
<feature type="transmembrane region" description="Helical" evidence="1">
    <location>
        <begin position="321"/>
        <end position="341"/>
    </location>
</feature>